<sequence>MSKKVLLGMSGGVDSTVSAMFLKEEGYEVEGLYMKLHSNPGYHEIHEARARKAADFLGIKLHVIDLQEIFNEKVFKPFVDTYAKGKTPNPCALCNRSLKFGEMLKFAYKIGADFVATGHYIKTDGKYFYEADDDTKDQSYFLFYVNKEILPRLLFPLGDRKKSEIKELAASINGLATFASQRESSEICFVETTYTDLLQDYVEVDKVGEVLDTSGKVVGEHKGYMHYTIGKRRGFSVNGAHDPHYVVSINPDKNQIIVGKKEDLACNSVVLNNLNLYSDEKSFDTTVKLRYRTKAIPCHVDIIDDKAHVTLKESVFGVAVGQAAVFYDGNKLLGGGWIEDN</sequence>
<evidence type="ECO:0000255" key="1">
    <source>
        <dbReference type="HAMAP-Rule" id="MF_00144"/>
    </source>
</evidence>
<dbReference type="EC" id="2.8.1.13" evidence="1"/>
<dbReference type="EMBL" id="CP000153">
    <property type="protein sequence ID" value="ABB43989.1"/>
    <property type="molecule type" value="Genomic_DNA"/>
</dbReference>
<dbReference type="RefSeq" id="WP_011372343.1">
    <property type="nucleotide sequence ID" value="NC_007575.1"/>
</dbReference>
<dbReference type="SMR" id="Q30SP2"/>
<dbReference type="STRING" id="326298.Suden_0710"/>
<dbReference type="KEGG" id="tdn:Suden_0710"/>
<dbReference type="eggNOG" id="COG0482">
    <property type="taxonomic scope" value="Bacteria"/>
</dbReference>
<dbReference type="HOGENOM" id="CLU_035188_0_0_7"/>
<dbReference type="Proteomes" id="UP000002714">
    <property type="component" value="Chromosome"/>
</dbReference>
<dbReference type="GO" id="GO:0005737">
    <property type="term" value="C:cytoplasm"/>
    <property type="evidence" value="ECO:0007669"/>
    <property type="project" value="UniProtKB-SubCell"/>
</dbReference>
<dbReference type="GO" id="GO:0005524">
    <property type="term" value="F:ATP binding"/>
    <property type="evidence" value="ECO:0007669"/>
    <property type="project" value="UniProtKB-KW"/>
</dbReference>
<dbReference type="GO" id="GO:0000049">
    <property type="term" value="F:tRNA binding"/>
    <property type="evidence" value="ECO:0007669"/>
    <property type="project" value="UniProtKB-KW"/>
</dbReference>
<dbReference type="GO" id="GO:0103016">
    <property type="term" value="F:tRNA-uridine 2-sulfurtransferase activity"/>
    <property type="evidence" value="ECO:0007669"/>
    <property type="project" value="UniProtKB-EC"/>
</dbReference>
<dbReference type="GO" id="GO:0002143">
    <property type="term" value="P:tRNA wobble position uridine thiolation"/>
    <property type="evidence" value="ECO:0007669"/>
    <property type="project" value="TreeGrafter"/>
</dbReference>
<dbReference type="CDD" id="cd01998">
    <property type="entry name" value="MnmA_TRMU-like"/>
    <property type="match status" value="1"/>
</dbReference>
<dbReference type="FunFam" id="2.30.30.280:FF:000001">
    <property type="entry name" value="tRNA-specific 2-thiouridylase MnmA"/>
    <property type="match status" value="1"/>
</dbReference>
<dbReference type="Gene3D" id="2.30.30.280">
    <property type="entry name" value="Adenine nucleotide alpha hydrolases-like domains"/>
    <property type="match status" value="1"/>
</dbReference>
<dbReference type="Gene3D" id="3.40.50.620">
    <property type="entry name" value="HUPs"/>
    <property type="match status" value="1"/>
</dbReference>
<dbReference type="Gene3D" id="2.40.30.10">
    <property type="entry name" value="Translation factors"/>
    <property type="match status" value="1"/>
</dbReference>
<dbReference type="HAMAP" id="MF_00144">
    <property type="entry name" value="tRNA_thiouridyl_MnmA"/>
    <property type="match status" value="1"/>
</dbReference>
<dbReference type="InterPro" id="IPR004506">
    <property type="entry name" value="MnmA-like"/>
</dbReference>
<dbReference type="InterPro" id="IPR046885">
    <property type="entry name" value="MnmA-like_C"/>
</dbReference>
<dbReference type="InterPro" id="IPR046884">
    <property type="entry name" value="MnmA-like_central"/>
</dbReference>
<dbReference type="InterPro" id="IPR023382">
    <property type="entry name" value="MnmA-like_central_sf"/>
</dbReference>
<dbReference type="InterPro" id="IPR014729">
    <property type="entry name" value="Rossmann-like_a/b/a_fold"/>
</dbReference>
<dbReference type="NCBIfam" id="NF001138">
    <property type="entry name" value="PRK00143.1"/>
    <property type="match status" value="1"/>
</dbReference>
<dbReference type="NCBIfam" id="TIGR00420">
    <property type="entry name" value="trmU"/>
    <property type="match status" value="1"/>
</dbReference>
<dbReference type="PANTHER" id="PTHR11933:SF5">
    <property type="entry name" value="MITOCHONDRIAL TRNA-SPECIFIC 2-THIOURIDYLASE 1"/>
    <property type="match status" value="1"/>
</dbReference>
<dbReference type="PANTHER" id="PTHR11933">
    <property type="entry name" value="TRNA 5-METHYLAMINOMETHYL-2-THIOURIDYLATE -METHYLTRANSFERASE"/>
    <property type="match status" value="1"/>
</dbReference>
<dbReference type="Pfam" id="PF03054">
    <property type="entry name" value="tRNA_Me_trans"/>
    <property type="match status" value="1"/>
</dbReference>
<dbReference type="Pfam" id="PF20258">
    <property type="entry name" value="tRNA_Me_trans_C"/>
    <property type="match status" value="1"/>
</dbReference>
<dbReference type="Pfam" id="PF20259">
    <property type="entry name" value="tRNA_Me_trans_M"/>
    <property type="match status" value="1"/>
</dbReference>
<dbReference type="SUPFAM" id="SSF52402">
    <property type="entry name" value="Adenine nucleotide alpha hydrolases-like"/>
    <property type="match status" value="1"/>
</dbReference>
<gene>
    <name evidence="1" type="primary">mnmA</name>
    <name type="ordered locus">Suden_0710</name>
</gene>
<organism>
    <name type="scientific">Sulfurimonas denitrificans (strain ATCC 33889 / DSM 1251)</name>
    <name type="common">Thiomicrospira denitrificans (strain ATCC 33889 / DSM 1251)</name>
    <dbReference type="NCBI Taxonomy" id="326298"/>
    <lineage>
        <taxon>Bacteria</taxon>
        <taxon>Pseudomonadati</taxon>
        <taxon>Campylobacterota</taxon>
        <taxon>Epsilonproteobacteria</taxon>
        <taxon>Campylobacterales</taxon>
        <taxon>Sulfurimonadaceae</taxon>
        <taxon>Sulfurimonas</taxon>
    </lineage>
</organism>
<reference key="1">
    <citation type="journal article" date="2008" name="Appl. Environ. Microbiol.">
        <title>Genome of the epsilonproteobacterial chemolithoautotroph Sulfurimonas denitrificans.</title>
        <authorList>
            <person name="Sievert S.M."/>
            <person name="Scott K.M."/>
            <person name="Klotz M.G."/>
            <person name="Chain P.S.G."/>
            <person name="Hauser L.J."/>
            <person name="Hemp J."/>
            <person name="Huegler M."/>
            <person name="Land M."/>
            <person name="Lapidus A."/>
            <person name="Larimer F.W."/>
            <person name="Lucas S."/>
            <person name="Malfatti S.A."/>
            <person name="Meyer F."/>
            <person name="Paulsen I.T."/>
            <person name="Ren Q."/>
            <person name="Simon J."/>
            <person name="Bailey K."/>
            <person name="Diaz E."/>
            <person name="Fitzpatrick K.A."/>
            <person name="Glover B."/>
            <person name="Gwatney N."/>
            <person name="Korajkic A."/>
            <person name="Long A."/>
            <person name="Mobberley J.M."/>
            <person name="Pantry S.N."/>
            <person name="Pazder G."/>
            <person name="Peterson S."/>
            <person name="Quintanilla J.D."/>
            <person name="Sprinkle R."/>
            <person name="Stephens J."/>
            <person name="Thomas P."/>
            <person name="Vaughn R."/>
            <person name="Weber M.J."/>
            <person name="Wooten L.L."/>
        </authorList>
    </citation>
    <scope>NUCLEOTIDE SEQUENCE [LARGE SCALE GENOMIC DNA]</scope>
    <source>
        <strain>ATCC 33889 / DSM 1251</strain>
    </source>
</reference>
<keyword id="KW-0067">ATP-binding</keyword>
<keyword id="KW-0963">Cytoplasm</keyword>
<keyword id="KW-1015">Disulfide bond</keyword>
<keyword id="KW-0547">Nucleotide-binding</keyword>
<keyword id="KW-1185">Reference proteome</keyword>
<keyword id="KW-0694">RNA-binding</keyword>
<keyword id="KW-0808">Transferase</keyword>
<keyword id="KW-0819">tRNA processing</keyword>
<keyword id="KW-0820">tRNA-binding</keyword>
<feature type="chain" id="PRO_0000349820" description="tRNA-specific 2-thiouridylase MnmA">
    <location>
        <begin position="1"/>
        <end position="341"/>
    </location>
</feature>
<feature type="region of interest" description="Interaction with tRNA" evidence="1">
    <location>
        <begin position="136"/>
        <end position="138"/>
    </location>
</feature>
<feature type="region of interest" description="Interaction with tRNA" evidence="1">
    <location>
        <begin position="290"/>
        <end position="291"/>
    </location>
</feature>
<feature type="active site" description="Nucleophile" evidence="1">
    <location>
        <position position="94"/>
    </location>
</feature>
<feature type="active site" description="Cysteine persulfide intermediate" evidence="1">
    <location>
        <position position="188"/>
    </location>
</feature>
<feature type="binding site" evidence="1">
    <location>
        <begin position="8"/>
        <end position="15"/>
    </location>
    <ligand>
        <name>ATP</name>
        <dbReference type="ChEBI" id="CHEBI:30616"/>
    </ligand>
</feature>
<feature type="binding site" evidence="1">
    <location>
        <position position="34"/>
    </location>
    <ligand>
        <name>ATP</name>
        <dbReference type="ChEBI" id="CHEBI:30616"/>
    </ligand>
</feature>
<feature type="binding site" evidence="1">
    <location>
        <position position="118"/>
    </location>
    <ligand>
        <name>ATP</name>
        <dbReference type="ChEBI" id="CHEBI:30616"/>
    </ligand>
</feature>
<feature type="site" description="Interaction with tRNA" evidence="1">
    <location>
        <position position="119"/>
    </location>
</feature>
<feature type="site" description="Interaction with tRNA" evidence="1">
    <location>
        <position position="322"/>
    </location>
</feature>
<feature type="disulfide bond" description="Alternate" evidence="1">
    <location>
        <begin position="94"/>
        <end position="188"/>
    </location>
</feature>
<proteinExistence type="inferred from homology"/>
<comment type="function">
    <text evidence="1">Catalyzes the 2-thiolation of uridine at the wobble position (U34) of tRNA, leading to the formation of s(2)U34.</text>
</comment>
<comment type="catalytic activity">
    <reaction evidence="1">
        <text>S-sulfanyl-L-cysteinyl-[protein] + uridine(34) in tRNA + AH2 + ATP = 2-thiouridine(34) in tRNA + L-cysteinyl-[protein] + A + AMP + diphosphate + H(+)</text>
        <dbReference type="Rhea" id="RHEA:47032"/>
        <dbReference type="Rhea" id="RHEA-COMP:10131"/>
        <dbReference type="Rhea" id="RHEA-COMP:11726"/>
        <dbReference type="Rhea" id="RHEA-COMP:11727"/>
        <dbReference type="Rhea" id="RHEA-COMP:11728"/>
        <dbReference type="ChEBI" id="CHEBI:13193"/>
        <dbReference type="ChEBI" id="CHEBI:15378"/>
        <dbReference type="ChEBI" id="CHEBI:17499"/>
        <dbReference type="ChEBI" id="CHEBI:29950"/>
        <dbReference type="ChEBI" id="CHEBI:30616"/>
        <dbReference type="ChEBI" id="CHEBI:33019"/>
        <dbReference type="ChEBI" id="CHEBI:61963"/>
        <dbReference type="ChEBI" id="CHEBI:65315"/>
        <dbReference type="ChEBI" id="CHEBI:87170"/>
        <dbReference type="ChEBI" id="CHEBI:456215"/>
        <dbReference type="EC" id="2.8.1.13"/>
    </reaction>
</comment>
<comment type="subcellular location">
    <subcellularLocation>
        <location evidence="1">Cytoplasm</location>
    </subcellularLocation>
</comment>
<comment type="similarity">
    <text evidence="1">Belongs to the MnmA/TRMU family.</text>
</comment>
<name>MNMA_SULDN</name>
<protein>
    <recommendedName>
        <fullName evidence="1">tRNA-specific 2-thiouridylase MnmA</fullName>
        <ecNumber evidence="1">2.8.1.13</ecNumber>
    </recommendedName>
</protein>
<accession>Q30SP2</accession>